<gene>
    <name type="ordered locus">SPJ_0357</name>
</gene>
<dbReference type="EMBL" id="CP000919">
    <property type="protein sequence ID" value="ACO20097.1"/>
    <property type="molecule type" value="Genomic_DNA"/>
</dbReference>
<dbReference type="RefSeq" id="WP_000179549.1">
    <property type="nucleotide sequence ID" value="NC_012466.1"/>
</dbReference>
<dbReference type="SMR" id="C1CCD6"/>
<dbReference type="KEGG" id="sjj:SPJ_0357"/>
<dbReference type="HOGENOM" id="CLU_105319_0_0_9"/>
<dbReference type="Proteomes" id="UP000002206">
    <property type="component" value="Chromosome"/>
</dbReference>
<dbReference type="Gene3D" id="3.40.50.450">
    <property type="match status" value="1"/>
</dbReference>
<dbReference type="HAMAP" id="MF_01575">
    <property type="entry name" value="UPF0398"/>
    <property type="match status" value="1"/>
</dbReference>
<dbReference type="InterPro" id="IPR010697">
    <property type="entry name" value="YspA"/>
</dbReference>
<dbReference type="NCBIfam" id="NF010181">
    <property type="entry name" value="PRK13660.1"/>
    <property type="match status" value="1"/>
</dbReference>
<dbReference type="PANTHER" id="PTHR38440:SF1">
    <property type="entry name" value="UPF0398 PROTEIN SPR0331"/>
    <property type="match status" value="1"/>
</dbReference>
<dbReference type="PANTHER" id="PTHR38440">
    <property type="entry name" value="UPF0398 PROTEIN YPSA"/>
    <property type="match status" value="1"/>
</dbReference>
<dbReference type="Pfam" id="PF06908">
    <property type="entry name" value="YpsA"/>
    <property type="match status" value="1"/>
</dbReference>
<dbReference type="PIRSF" id="PIRSF021290">
    <property type="entry name" value="DUF1273"/>
    <property type="match status" value="1"/>
</dbReference>
<dbReference type="SUPFAM" id="SSF102405">
    <property type="entry name" value="MCP/YpsA-like"/>
    <property type="match status" value="1"/>
</dbReference>
<organism>
    <name type="scientific">Streptococcus pneumoniae (strain JJA)</name>
    <dbReference type="NCBI Taxonomy" id="488222"/>
    <lineage>
        <taxon>Bacteria</taxon>
        <taxon>Bacillati</taxon>
        <taxon>Bacillota</taxon>
        <taxon>Bacilli</taxon>
        <taxon>Lactobacillales</taxon>
        <taxon>Streptococcaceae</taxon>
        <taxon>Streptococcus</taxon>
    </lineage>
</organism>
<evidence type="ECO:0000255" key="1">
    <source>
        <dbReference type="HAMAP-Rule" id="MF_01575"/>
    </source>
</evidence>
<sequence>MATALVLGYSAFDLGLFSDKDPRLKLIKKAIRKDLEAMAADGVSWLVFTGSLGFEYWVLEVAQEMKTEYGFQLATIFAFETHGENWNEGNQMKLSRFKQVDFVKYAYPRYEHKGQLRDYQQFLLENTTSSYLFYDEENETKLAYFYQKMKNQEDYFIKRLTFDQLNELAENFSEN</sequence>
<comment type="similarity">
    <text evidence="1">Belongs to the UPF0398 family.</text>
</comment>
<proteinExistence type="inferred from homology"/>
<protein>
    <recommendedName>
        <fullName evidence="1">UPF0398 protein SPJ_0357</fullName>
    </recommendedName>
</protein>
<reference key="1">
    <citation type="journal article" date="2010" name="Genome Biol.">
        <title>Structure and dynamics of the pan-genome of Streptococcus pneumoniae and closely related species.</title>
        <authorList>
            <person name="Donati C."/>
            <person name="Hiller N.L."/>
            <person name="Tettelin H."/>
            <person name="Muzzi A."/>
            <person name="Croucher N.J."/>
            <person name="Angiuoli S.V."/>
            <person name="Oggioni M."/>
            <person name="Dunning Hotopp J.C."/>
            <person name="Hu F.Z."/>
            <person name="Riley D.R."/>
            <person name="Covacci A."/>
            <person name="Mitchell T.J."/>
            <person name="Bentley S.D."/>
            <person name="Kilian M."/>
            <person name="Ehrlich G.D."/>
            <person name="Rappuoli R."/>
            <person name="Moxon E.R."/>
            <person name="Masignani V."/>
        </authorList>
    </citation>
    <scope>NUCLEOTIDE SEQUENCE [LARGE SCALE GENOMIC DNA]</scope>
    <source>
        <strain>JJA</strain>
    </source>
</reference>
<name>Y357_STRZJ</name>
<accession>C1CCD6</accession>
<feature type="chain" id="PRO_1000185589" description="UPF0398 protein SPJ_0357">
    <location>
        <begin position="1"/>
        <end position="175"/>
    </location>
</feature>